<keyword id="KW-0002">3D-structure</keyword>
<keyword id="KW-0007">Acetylation</keyword>
<keyword id="KW-0963">Cytoplasm</keyword>
<keyword id="KW-1185">Reference proteome</keyword>
<keyword id="KW-0687">Ribonucleoprotein</keyword>
<keyword id="KW-0689">Ribosomal protein</keyword>
<comment type="function">
    <text evidence="8">Component of the ribosome, a large ribonucleoprotein complex responsible for the synthesis of proteins in the cell. The small ribosomal subunit (SSU) binds messenger RNAs (mRNAs) and translates the encoded message by selecting cognate aminoacyl-transfer RNA (tRNA) molecules. The large subunit (LSU) contains the ribosomal catalytic site termed the peptidyl transferase center (PTC), which catalyzes the formation of peptide bonds, thereby polymerizing the amino acids delivered by tRNAs into a polypeptide chain. The nascent polypeptides leave the ribosome through a tunnel in the LSU and interact with protein factors that function in enzymatic processing, targeting, and the membrane insertion of nascent chains at the exit of the ribosomal tunnel.</text>
</comment>
<comment type="subunit">
    <text evidence="4 9">Component of the large ribosomal subunit (LSU). Mature yeast ribosomes consist of a small (40S) and a large (60S) subunit. The 40S small subunit contains 1 molecule of ribosomal RNA (18S rRNA) and 33 different proteins (encoded by 57 genes). The large 60S subunit contains 3 rRNA molecules (25S, 5.8S and 5S rRNA) and 46 different proteins (encoded by 81 genes) (PubMed:22096102, PubMed:9559554).</text>
</comment>
<comment type="subcellular location">
    <subcellularLocation>
        <location evidence="2 4">Cytoplasm</location>
    </subcellularLocation>
</comment>
<comment type="PTM">
    <text evidence="1">N-terminally acetylated by acetyltransferase NatA.</text>
</comment>
<comment type="miscellaneous">
    <text evidence="3">Present with 45300 molecules/cell in log phase SD medium.</text>
</comment>
<comment type="miscellaneous">
    <text evidence="7">There are 2 genes for eL14 in yeast.</text>
</comment>
<comment type="similarity">
    <text evidence="7">Belongs to the eukaryotic ribosomal protein eL14 family.</text>
</comment>
<sequence>MSTDSIVKASNWRLVEVGRVVLIKKGQSAGKLAAIVEIIDQKKVLIDGPKAGVPRQAINLGQVVLTPLTFALPRGARTATVSKKWAAAAVCEKWAASSWAKKIAQRERRAALTDFERFQVMVLRKQKRYTVKKALAKA</sequence>
<evidence type="ECO:0000269" key="1">
    <source>
    </source>
</evidence>
<evidence type="ECO:0000269" key="2">
    <source>
    </source>
</evidence>
<evidence type="ECO:0000269" key="3">
    <source>
    </source>
</evidence>
<evidence type="ECO:0000269" key="4">
    <source>
    </source>
</evidence>
<evidence type="ECO:0000303" key="5">
    <source>
    </source>
</evidence>
<evidence type="ECO:0000303" key="6">
    <source>
    </source>
</evidence>
<evidence type="ECO:0000305" key="7"/>
<evidence type="ECO:0000305" key="8">
    <source>
    </source>
</evidence>
<evidence type="ECO:0000305" key="9">
    <source>
    </source>
</evidence>
<evidence type="ECO:0007829" key="10">
    <source>
        <dbReference type="PDB" id="6EM3"/>
    </source>
</evidence>
<reference key="1">
    <citation type="journal article" date="1993" name="Yeast">
        <title>Sequence of a 7.8 kb segment on the left arm of yeast chromosome XI reveals four open reading frames, including the CAP1 gene, an intron-containing gene and a gene encoding a homolog to the mammalian UOG-1 gene.</title>
        <authorList>
            <person name="Boyer J."/>
            <person name="Pascolo S."/>
            <person name="Richard G.-F."/>
            <person name="Dujon B."/>
        </authorList>
    </citation>
    <scope>NUCLEOTIDE SEQUENCE [GENOMIC DNA]</scope>
</reference>
<reference key="2">
    <citation type="journal article" date="1994" name="Nature">
        <title>Complete DNA sequence of yeast chromosome XI.</title>
        <authorList>
            <person name="Dujon B."/>
            <person name="Alexandraki D."/>
            <person name="Andre B."/>
            <person name="Ansorge W."/>
            <person name="Baladron V."/>
            <person name="Ballesta J.P.G."/>
            <person name="Banrevi A."/>
            <person name="Bolle P.-A."/>
            <person name="Bolotin-Fukuhara M."/>
            <person name="Bossier P."/>
            <person name="Bou G."/>
            <person name="Boyer J."/>
            <person name="Buitrago M.J."/>
            <person name="Cheret G."/>
            <person name="Colleaux L."/>
            <person name="Daignan-Fornier B."/>
            <person name="del Rey F."/>
            <person name="Dion C."/>
            <person name="Domdey H."/>
            <person name="Duesterhoeft A."/>
            <person name="Duesterhus S."/>
            <person name="Entian K.-D."/>
            <person name="Erfle H."/>
            <person name="Esteban P.F."/>
            <person name="Feldmann H."/>
            <person name="Fernandes L."/>
            <person name="Fobo G.M."/>
            <person name="Fritz C."/>
            <person name="Fukuhara H."/>
            <person name="Gabel C."/>
            <person name="Gaillon L."/>
            <person name="Garcia-Cantalejo J.M."/>
            <person name="Garcia-Ramirez J.J."/>
            <person name="Gent M.E."/>
            <person name="Ghazvini M."/>
            <person name="Goffeau A."/>
            <person name="Gonzalez A."/>
            <person name="Grothues D."/>
            <person name="Guerreiro P."/>
            <person name="Hegemann J.H."/>
            <person name="Hewitt N."/>
            <person name="Hilger F."/>
            <person name="Hollenberg C.P."/>
            <person name="Horaitis O."/>
            <person name="Indge K.J."/>
            <person name="Jacquier A."/>
            <person name="James C.M."/>
            <person name="Jauniaux J.-C."/>
            <person name="Jimenez A."/>
            <person name="Keuchel H."/>
            <person name="Kirchrath L."/>
            <person name="Kleine K."/>
            <person name="Koetter P."/>
            <person name="Legrain P."/>
            <person name="Liebl S."/>
            <person name="Louis E.J."/>
            <person name="Maia e Silva A."/>
            <person name="Marck C."/>
            <person name="Monnier A.-L."/>
            <person name="Moestl D."/>
            <person name="Mueller S."/>
            <person name="Obermaier B."/>
            <person name="Oliver S.G."/>
            <person name="Pallier C."/>
            <person name="Pascolo S."/>
            <person name="Pfeiffer F."/>
            <person name="Philippsen P."/>
            <person name="Planta R.J."/>
            <person name="Pohl F.M."/>
            <person name="Pohl T.M."/>
            <person name="Poehlmann R."/>
            <person name="Portetelle D."/>
            <person name="Purnelle B."/>
            <person name="Puzos V."/>
            <person name="Ramezani Rad M."/>
            <person name="Rasmussen S.W."/>
            <person name="Remacha M.A."/>
            <person name="Revuelta J.L."/>
            <person name="Richard G.-F."/>
            <person name="Rieger M."/>
            <person name="Rodrigues-Pousada C."/>
            <person name="Rose M."/>
            <person name="Rupp T."/>
            <person name="Santos M.A."/>
            <person name="Schwager C."/>
            <person name="Sensen C."/>
            <person name="Skala J."/>
            <person name="Soares H."/>
            <person name="Sor F."/>
            <person name="Stegemann J."/>
            <person name="Tettelin H."/>
            <person name="Thierry A."/>
            <person name="Tzermia M."/>
            <person name="Urrestarazu L.A."/>
            <person name="van Dyck L."/>
            <person name="van Vliet-Reedijk J.C."/>
            <person name="Valens M."/>
            <person name="Vandenbol M."/>
            <person name="Vilela C."/>
            <person name="Vissers S."/>
            <person name="von Wettstein D."/>
            <person name="Voss H."/>
            <person name="Wiemann S."/>
            <person name="Xu G."/>
            <person name="Zimmermann J."/>
            <person name="Haasemann M."/>
            <person name="Becker I."/>
            <person name="Mewes H.-W."/>
        </authorList>
    </citation>
    <scope>NUCLEOTIDE SEQUENCE [LARGE SCALE GENOMIC DNA]</scope>
    <source>
        <strain>ATCC 204508 / S288c</strain>
    </source>
</reference>
<reference key="3">
    <citation type="journal article" date="2014" name="G3 (Bethesda)">
        <title>The reference genome sequence of Saccharomyces cerevisiae: Then and now.</title>
        <authorList>
            <person name="Engel S.R."/>
            <person name="Dietrich F.S."/>
            <person name="Fisk D.G."/>
            <person name="Binkley G."/>
            <person name="Balakrishnan R."/>
            <person name="Costanzo M.C."/>
            <person name="Dwight S.S."/>
            <person name="Hitz B.C."/>
            <person name="Karra K."/>
            <person name="Nash R.S."/>
            <person name="Weng S."/>
            <person name="Wong E.D."/>
            <person name="Lloyd P."/>
            <person name="Skrzypek M.S."/>
            <person name="Miyasato S.R."/>
            <person name="Simison M."/>
            <person name="Cherry J.M."/>
        </authorList>
    </citation>
    <scope>GENOME REANNOTATION</scope>
    <source>
        <strain>ATCC 204508 / S288c</strain>
    </source>
</reference>
<reference key="4">
    <citation type="journal article" date="1998" name="Yeast">
        <title>The list of cytoplasmic ribosomal proteins of Saccharomyces cerevisiae.</title>
        <authorList>
            <person name="Planta R.J."/>
            <person name="Mager W.H."/>
        </authorList>
    </citation>
    <scope>NOMENCLATURE</scope>
    <scope>SUBUNIT</scope>
</reference>
<reference key="5">
    <citation type="journal article" date="1999" name="J. Biol. Chem.">
        <title>The action of N-terminal acetyltransferases on yeast ribosomal proteins.</title>
        <authorList>
            <person name="Arnold R.J."/>
            <person name="Polevoda B."/>
            <person name="Reilly J.P."/>
            <person name="Sherman F."/>
        </authorList>
    </citation>
    <scope>CLEAVAGE OF INITIATOR METHIONINE</scope>
    <scope>ACETYLATION AT SER-2 BY NATA</scope>
</reference>
<reference key="6">
    <citation type="journal article" date="2003" name="Nature">
        <title>Global analysis of protein localization in budding yeast.</title>
        <authorList>
            <person name="Huh W.-K."/>
            <person name="Falvo J.V."/>
            <person name="Gerke L.C."/>
            <person name="Carroll A.S."/>
            <person name="Howson R.W."/>
            <person name="Weissman J.S."/>
            <person name="O'Shea E.K."/>
        </authorList>
    </citation>
    <scope>SUBCELLULAR LOCATION [LARGE SCALE ANALYSIS]</scope>
</reference>
<reference key="7">
    <citation type="journal article" date="2003" name="Nature">
        <title>Global analysis of protein expression in yeast.</title>
        <authorList>
            <person name="Ghaemmaghami S."/>
            <person name="Huh W.-K."/>
            <person name="Bower K."/>
            <person name="Howson R.W."/>
            <person name="Belle A."/>
            <person name="Dephoure N."/>
            <person name="O'Shea E.K."/>
            <person name="Weissman J.S."/>
        </authorList>
    </citation>
    <scope>LEVEL OF PROTEIN EXPRESSION [LARGE SCALE ANALYSIS]</scope>
</reference>
<reference key="8">
    <citation type="journal article" date="2014" name="Curr. Opin. Struct. Biol.">
        <title>A new system for naming ribosomal proteins.</title>
        <authorList>
            <person name="Ban N."/>
            <person name="Beckmann R."/>
            <person name="Cate J.H.D."/>
            <person name="Dinman J.D."/>
            <person name="Dragon F."/>
            <person name="Ellis S.R."/>
            <person name="Lafontaine D.L.J."/>
            <person name="Lindahl L."/>
            <person name="Liljas A."/>
            <person name="Lipton J.M."/>
            <person name="McAlear M.A."/>
            <person name="Moore P.B."/>
            <person name="Noller H.F."/>
            <person name="Ortega J."/>
            <person name="Panse V.G."/>
            <person name="Ramakrishnan V."/>
            <person name="Spahn C.M.T."/>
            <person name="Steitz T.A."/>
            <person name="Tchorzewski M."/>
            <person name="Tollervey D."/>
            <person name="Warren A.J."/>
            <person name="Williamson J.R."/>
            <person name="Wilson D."/>
            <person name="Yonath A."/>
            <person name="Yusupov M."/>
        </authorList>
    </citation>
    <scope>NOMENCLATURE</scope>
</reference>
<reference key="9">
    <citation type="journal article" date="2010" name="Science">
        <title>Crystal structure of the eukaryotic ribosome.</title>
        <authorList>
            <person name="Ben-Shem A."/>
            <person name="Jenner L."/>
            <person name="Yusupova G."/>
            <person name="Yusupov M."/>
        </authorList>
    </citation>
    <scope>X-RAY CRYSTALLOGRAPHY (4.0 ANGSTROMS) OF 80S RIBOSOME</scope>
</reference>
<reference key="10">
    <citation type="journal article" date="2011" name="Science">
        <title>The structure of the eukaryotic ribosome at 3.0 A resolution.</title>
        <authorList>
            <person name="Ben-Shem A."/>
            <person name="Garreau de Loubresse N."/>
            <person name="Melnikov S."/>
            <person name="Jenner L."/>
            <person name="Yusupova G."/>
            <person name="Yusupov M."/>
        </authorList>
    </citation>
    <scope>X-RAY CRYSTALLOGRAPHY (3.0 ANGSTROMS) OF 80S RIBOSOME</scope>
    <scope>SUBUNIT</scope>
    <scope>SUBCELLULAR LOCATION</scope>
</reference>
<organism>
    <name type="scientific">Saccharomyces cerevisiae (strain ATCC 204508 / S288c)</name>
    <name type="common">Baker's yeast</name>
    <dbReference type="NCBI Taxonomy" id="559292"/>
    <lineage>
        <taxon>Eukaryota</taxon>
        <taxon>Fungi</taxon>
        <taxon>Dikarya</taxon>
        <taxon>Ascomycota</taxon>
        <taxon>Saccharomycotina</taxon>
        <taxon>Saccharomycetes</taxon>
        <taxon>Saccharomycetales</taxon>
        <taxon>Saccharomycetaceae</taxon>
        <taxon>Saccharomyces</taxon>
    </lineage>
</organism>
<protein>
    <recommendedName>
        <fullName evidence="5">Large ribosomal subunit protein eL14A</fullName>
    </recommendedName>
    <alternativeName>
        <fullName evidence="6">60S ribosomal protein L14-A</fullName>
    </alternativeName>
</protein>
<feature type="initiator methionine" description="Removed" evidence="1">
    <location>
        <position position="1"/>
    </location>
</feature>
<feature type="chain" id="PRO_0000132043" description="Large ribosomal subunit protein eL14A">
    <location>
        <begin position="2"/>
        <end position="138"/>
    </location>
</feature>
<feature type="modified residue" description="N-acetylserine" evidence="1">
    <location>
        <position position="2"/>
    </location>
</feature>
<feature type="strand" evidence="10">
    <location>
        <begin position="19"/>
        <end position="23"/>
    </location>
</feature>
<feature type="strand" evidence="10">
    <location>
        <begin position="25"/>
        <end position="28"/>
    </location>
</feature>
<feature type="strand" evidence="10">
    <location>
        <begin position="32"/>
        <end position="38"/>
    </location>
</feature>
<feature type="strand" evidence="10">
    <location>
        <begin position="40"/>
        <end position="48"/>
    </location>
</feature>
<feature type="turn" evidence="10">
    <location>
        <begin position="49"/>
        <end position="52"/>
    </location>
</feature>
<feature type="strand" evidence="10">
    <location>
        <begin position="53"/>
        <end position="59"/>
    </location>
</feature>
<feature type="strand" evidence="10">
    <location>
        <begin position="62"/>
        <end position="69"/>
    </location>
</feature>
<feature type="helix" evidence="10">
    <location>
        <begin position="78"/>
        <end position="88"/>
    </location>
</feature>
<feature type="helix" evidence="10">
    <location>
        <begin position="90"/>
        <end position="95"/>
    </location>
</feature>
<feature type="helix" evidence="10">
    <location>
        <begin position="98"/>
        <end position="110"/>
    </location>
</feature>
<feature type="helix" evidence="10">
    <location>
        <begin position="114"/>
        <end position="134"/>
    </location>
</feature>
<name>RL14A_YEAST</name>
<gene>
    <name evidence="6" type="primary">RPL14A</name>
    <name type="ordered locus">YKL006W</name>
    <name type="ORF">YKL153</name>
</gene>
<dbReference type="EMBL" id="X61398">
    <property type="status" value="NOT_ANNOTATED_CDS"/>
    <property type="molecule type" value="Genomic_DNA"/>
</dbReference>
<dbReference type="EMBL" id="Z28006">
    <property type="protein sequence ID" value="CAA81839.1"/>
    <property type="molecule type" value="Genomic_DNA"/>
</dbReference>
<dbReference type="EMBL" id="Z28005">
    <property type="protein sequence ID" value="CAA81838.1"/>
    <property type="molecule type" value="Genomic_DNA"/>
</dbReference>
<dbReference type="EMBL" id="S59773">
    <property type="protein sequence ID" value="AAC60550.1"/>
    <property type="molecule type" value="Genomic_DNA"/>
</dbReference>
<dbReference type="EMBL" id="BK006944">
    <property type="protein sequence ID" value="DAA09151.1"/>
    <property type="molecule type" value="Genomic_DNA"/>
</dbReference>
<dbReference type="PIR" id="S30133">
    <property type="entry name" value="S30133"/>
</dbReference>
<dbReference type="RefSeq" id="NP_012920.1">
    <property type="nucleotide sequence ID" value="NM_001179572.1"/>
</dbReference>
<dbReference type="PDB" id="3J6X">
    <property type="method" value="EM"/>
    <property type="resolution" value="6.10 A"/>
    <property type="chains" value="54=1-138"/>
</dbReference>
<dbReference type="PDB" id="3J6Y">
    <property type="method" value="EM"/>
    <property type="resolution" value="6.10 A"/>
    <property type="chains" value="54=1-138"/>
</dbReference>
<dbReference type="PDB" id="3J77">
    <property type="method" value="EM"/>
    <property type="resolution" value="6.20 A"/>
    <property type="chains" value="64=1-138"/>
</dbReference>
<dbReference type="PDB" id="3J78">
    <property type="method" value="EM"/>
    <property type="resolution" value="6.30 A"/>
    <property type="chains" value="64=1-138"/>
</dbReference>
<dbReference type="PDB" id="3JCT">
    <property type="method" value="EM"/>
    <property type="resolution" value="3.08 A"/>
    <property type="chains" value="M=1-138"/>
</dbReference>
<dbReference type="PDB" id="4U3M">
    <property type="method" value="X-ray"/>
    <property type="resolution" value="3.00 A"/>
    <property type="chains" value="M4/m4=2-138"/>
</dbReference>
<dbReference type="PDB" id="4U3N">
    <property type="method" value="X-ray"/>
    <property type="resolution" value="3.20 A"/>
    <property type="chains" value="M4/m4=2-138"/>
</dbReference>
<dbReference type="PDB" id="4U3U">
    <property type="method" value="X-ray"/>
    <property type="resolution" value="2.90 A"/>
    <property type="chains" value="M4/m4=2-138"/>
</dbReference>
<dbReference type="PDB" id="4U4N">
    <property type="method" value="X-ray"/>
    <property type="resolution" value="3.10 A"/>
    <property type="chains" value="M4/m4=2-138"/>
</dbReference>
<dbReference type="PDB" id="4U4O">
    <property type="method" value="X-ray"/>
    <property type="resolution" value="3.60 A"/>
    <property type="chains" value="M4/m4=2-138"/>
</dbReference>
<dbReference type="PDB" id="4U4Q">
    <property type="method" value="X-ray"/>
    <property type="resolution" value="3.00 A"/>
    <property type="chains" value="M4/m4=2-138"/>
</dbReference>
<dbReference type="PDB" id="4U4R">
    <property type="method" value="X-ray"/>
    <property type="resolution" value="2.80 A"/>
    <property type="chains" value="M4/m4=2-138"/>
</dbReference>
<dbReference type="PDB" id="4U4U">
    <property type="method" value="X-ray"/>
    <property type="resolution" value="3.00 A"/>
    <property type="chains" value="M4/m4=2-138"/>
</dbReference>
<dbReference type="PDB" id="4U4Y">
    <property type="method" value="X-ray"/>
    <property type="resolution" value="3.20 A"/>
    <property type="chains" value="M4/m4=2-138"/>
</dbReference>
<dbReference type="PDB" id="4U4Z">
    <property type="method" value="X-ray"/>
    <property type="resolution" value="3.10 A"/>
    <property type="chains" value="M4/m4=2-138"/>
</dbReference>
<dbReference type="PDB" id="4U50">
    <property type="method" value="X-ray"/>
    <property type="resolution" value="3.20 A"/>
    <property type="chains" value="M4/m4=2-138"/>
</dbReference>
<dbReference type="PDB" id="4U51">
    <property type="method" value="X-ray"/>
    <property type="resolution" value="3.20 A"/>
    <property type="chains" value="M4/m4=2-138"/>
</dbReference>
<dbReference type="PDB" id="4U52">
    <property type="method" value="X-ray"/>
    <property type="resolution" value="3.00 A"/>
    <property type="chains" value="M4/m4=2-138"/>
</dbReference>
<dbReference type="PDB" id="4U53">
    <property type="method" value="X-ray"/>
    <property type="resolution" value="3.30 A"/>
    <property type="chains" value="M4/m4=2-138"/>
</dbReference>
<dbReference type="PDB" id="4U55">
    <property type="method" value="X-ray"/>
    <property type="resolution" value="3.20 A"/>
    <property type="chains" value="M4/m4=2-138"/>
</dbReference>
<dbReference type="PDB" id="4U56">
    <property type="method" value="X-ray"/>
    <property type="resolution" value="3.45 A"/>
    <property type="chains" value="M4/m4=2-138"/>
</dbReference>
<dbReference type="PDB" id="4U6F">
    <property type="method" value="X-ray"/>
    <property type="resolution" value="3.10 A"/>
    <property type="chains" value="M4/m4=2-138"/>
</dbReference>
<dbReference type="PDB" id="4V6I">
    <property type="method" value="EM"/>
    <property type="resolution" value="8.80 A"/>
    <property type="chains" value="BN=1-138"/>
</dbReference>
<dbReference type="PDB" id="4V7F">
    <property type="method" value="EM"/>
    <property type="resolution" value="8.70 A"/>
    <property type="chains" value="M=1-138"/>
</dbReference>
<dbReference type="PDB" id="4V7R">
    <property type="method" value="X-ray"/>
    <property type="resolution" value="4.00 A"/>
    <property type="chains" value="BN/DN=1-138"/>
</dbReference>
<dbReference type="PDB" id="4V88">
    <property type="method" value="X-ray"/>
    <property type="resolution" value="3.00 A"/>
    <property type="chains" value="BM/DM=1-138"/>
</dbReference>
<dbReference type="PDB" id="4V8T">
    <property type="method" value="EM"/>
    <property type="resolution" value="8.10 A"/>
    <property type="chains" value="M=1-138"/>
</dbReference>
<dbReference type="PDB" id="5APN">
    <property type="method" value="EM"/>
    <property type="resolution" value="3.91 A"/>
    <property type="chains" value="M=1-138"/>
</dbReference>
<dbReference type="PDB" id="5APO">
    <property type="method" value="EM"/>
    <property type="resolution" value="3.41 A"/>
    <property type="chains" value="M=1-138"/>
</dbReference>
<dbReference type="PDB" id="5DAT">
    <property type="method" value="X-ray"/>
    <property type="resolution" value="3.15 A"/>
    <property type="chains" value="M4/m4=2-138"/>
</dbReference>
<dbReference type="PDB" id="5DC3">
    <property type="method" value="X-ray"/>
    <property type="resolution" value="3.25 A"/>
    <property type="chains" value="M4/m4=2-138"/>
</dbReference>
<dbReference type="PDB" id="5DGE">
    <property type="method" value="X-ray"/>
    <property type="resolution" value="3.45 A"/>
    <property type="chains" value="M4/m4=2-138"/>
</dbReference>
<dbReference type="PDB" id="5DGF">
    <property type="method" value="X-ray"/>
    <property type="resolution" value="3.30 A"/>
    <property type="chains" value="M4/m4=2-138"/>
</dbReference>
<dbReference type="PDB" id="5DGV">
    <property type="method" value="X-ray"/>
    <property type="resolution" value="3.10 A"/>
    <property type="chains" value="M4/m4=2-138"/>
</dbReference>
<dbReference type="PDB" id="5FCI">
    <property type="method" value="X-ray"/>
    <property type="resolution" value="3.40 A"/>
    <property type="chains" value="M4/m4=2-138"/>
</dbReference>
<dbReference type="PDB" id="5FCJ">
    <property type="method" value="X-ray"/>
    <property type="resolution" value="3.10 A"/>
    <property type="chains" value="M4/m4=2-138"/>
</dbReference>
<dbReference type="PDB" id="5GAK">
    <property type="method" value="EM"/>
    <property type="resolution" value="3.88 A"/>
    <property type="chains" value="O=1-138"/>
</dbReference>
<dbReference type="PDB" id="5H4P">
    <property type="method" value="EM"/>
    <property type="resolution" value="3.07 A"/>
    <property type="chains" value="M=1-138"/>
</dbReference>
<dbReference type="PDB" id="5I4L">
    <property type="method" value="X-ray"/>
    <property type="resolution" value="3.10 A"/>
    <property type="chains" value="M4/m4=2-138"/>
</dbReference>
<dbReference type="PDB" id="5JCS">
    <property type="method" value="EM"/>
    <property type="resolution" value="9.50 A"/>
    <property type="chains" value="M=1-138"/>
</dbReference>
<dbReference type="PDB" id="5JUO">
    <property type="method" value="EM"/>
    <property type="resolution" value="4.00 A"/>
    <property type="chains" value="R=1-138"/>
</dbReference>
<dbReference type="PDB" id="5JUP">
    <property type="method" value="EM"/>
    <property type="resolution" value="3.50 A"/>
    <property type="chains" value="R=1-138"/>
</dbReference>
<dbReference type="PDB" id="5JUS">
    <property type="method" value="EM"/>
    <property type="resolution" value="4.20 A"/>
    <property type="chains" value="R=1-138"/>
</dbReference>
<dbReference type="PDB" id="5JUT">
    <property type="method" value="EM"/>
    <property type="resolution" value="4.00 A"/>
    <property type="chains" value="R=1-138"/>
</dbReference>
<dbReference type="PDB" id="5JUU">
    <property type="method" value="EM"/>
    <property type="resolution" value="4.00 A"/>
    <property type="chains" value="R=1-138"/>
</dbReference>
<dbReference type="PDB" id="5LYB">
    <property type="method" value="X-ray"/>
    <property type="resolution" value="3.25 A"/>
    <property type="chains" value="M4/m4=2-138"/>
</dbReference>
<dbReference type="PDB" id="5M1J">
    <property type="method" value="EM"/>
    <property type="resolution" value="3.30 A"/>
    <property type="chains" value="M5=3-138"/>
</dbReference>
<dbReference type="PDB" id="5MC6">
    <property type="method" value="EM"/>
    <property type="resolution" value="3.80 A"/>
    <property type="chains" value="AM=1-138"/>
</dbReference>
<dbReference type="PDB" id="5MEI">
    <property type="method" value="X-ray"/>
    <property type="resolution" value="3.50 A"/>
    <property type="chains" value="CO/u=3-138"/>
</dbReference>
<dbReference type="PDB" id="5NDG">
    <property type="method" value="X-ray"/>
    <property type="resolution" value="3.70 A"/>
    <property type="chains" value="M4/m4=2-138"/>
</dbReference>
<dbReference type="PDB" id="5NDV">
    <property type="method" value="X-ray"/>
    <property type="resolution" value="3.30 A"/>
    <property type="chains" value="M4/m4=2-138"/>
</dbReference>
<dbReference type="PDB" id="5NDW">
    <property type="method" value="X-ray"/>
    <property type="resolution" value="3.70 A"/>
    <property type="chains" value="M4/m4=2-138"/>
</dbReference>
<dbReference type="PDB" id="5OBM">
    <property type="method" value="X-ray"/>
    <property type="resolution" value="3.40 A"/>
    <property type="chains" value="M4/m4=2-138"/>
</dbReference>
<dbReference type="PDB" id="5ON6">
    <property type="method" value="X-ray"/>
    <property type="resolution" value="3.10 A"/>
    <property type="chains" value="CO/u=3-138"/>
</dbReference>
<dbReference type="PDB" id="5T62">
    <property type="method" value="EM"/>
    <property type="resolution" value="3.30 A"/>
    <property type="chains" value="O=1-138"/>
</dbReference>
<dbReference type="PDB" id="5T6R">
    <property type="method" value="EM"/>
    <property type="resolution" value="4.50 A"/>
    <property type="chains" value="O=1-138"/>
</dbReference>
<dbReference type="PDB" id="5TBW">
    <property type="method" value="X-ray"/>
    <property type="resolution" value="3.00 A"/>
    <property type="chains" value="CO/u=3-138"/>
</dbReference>
<dbReference type="PDB" id="5TGA">
    <property type="method" value="X-ray"/>
    <property type="resolution" value="3.30 A"/>
    <property type="chains" value="M4/m4=2-138"/>
</dbReference>
<dbReference type="PDB" id="5TGM">
    <property type="method" value="X-ray"/>
    <property type="resolution" value="3.50 A"/>
    <property type="chains" value="M4/m4=2-138"/>
</dbReference>
<dbReference type="PDB" id="5Z3G">
    <property type="method" value="EM"/>
    <property type="resolution" value="3.65 A"/>
    <property type="chains" value="Q=1-138"/>
</dbReference>
<dbReference type="PDB" id="6C0F">
    <property type="method" value="EM"/>
    <property type="resolution" value="3.70 A"/>
    <property type="chains" value="M=1-138"/>
</dbReference>
<dbReference type="PDB" id="6CB1">
    <property type="method" value="EM"/>
    <property type="resolution" value="4.60 A"/>
    <property type="chains" value="M=1-138"/>
</dbReference>
<dbReference type="PDB" id="6ELZ">
    <property type="method" value="EM"/>
    <property type="resolution" value="3.30 A"/>
    <property type="chains" value="M=1-138"/>
</dbReference>
<dbReference type="PDB" id="6EM1">
    <property type="method" value="EM"/>
    <property type="resolution" value="3.60 A"/>
    <property type="chains" value="M=1-138"/>
</dbReference>
<dbReference type="PDB" id="6EM3">
    <property type="method" value="EM"/>
    <property type="resolution" value="3.20 A"/>
    <property type="chains" value="M=1-138"/>
</dbReference>
<dbReference type="PDB" id="6EM4">
    <property type="method" value="EM"/>
    <property type="resolution" value="4.10 A"/>
    <property type="chains" value="M=1-138"/>
</dbReference>
<dbReference type="PDB" id="6EM5">
    <property type="method" value="EM"/>
    <property type="resolution" value="4.30 A"/>
    <property type="chains" value="M=1-138"/>
</dbReference>
<dbReference type="PDB" id="6FT6">
    <property type="method" value="EM"/>
    <property type="resolution" value="3.90 A"/>
    <property type="chains" value="M=1-138"/>
</dbReference>
<dbReference type="PDB" id="6GQ1">
    <property type="method" value="EM"/>
    <property type="resolution" value="4.40 A"/>
    <property type="chains" value="M=3-138"/>
</dbReference>
<dbReference type="PDB" id="6GQB">
    <property type="method" value="EM"/>
    <property type="resolution" value="3.90 A"/>
    <property type="chains" value="M=3-138"/>
</dbReference>
<dbReference type="PDB" id="6GQV">
    <property type="method" value="EM"/>
    <property type="resolution" value="4.00 A"/>
    <property type="chains" value="M=3-138"/>
</dbReference>
<dbReference type="PDB" id="6HD7">
    <property type="method" value="EM"/>
    <property type="resolution" value="3.40 A"/>
    <property type="chains" value="O=1-138"/>
</dbReference>
<dbReference type="PDB" id="6HHQ">
    <property type="method" value="X-ray"/>
    <property type="resolution" value="3.10 A"/>
    <property type="chains" value="CO/u=1-138"/>
</dbReference>
<dbReference type="PDB" id="6I7O">
    <property type="method" value="EM"/>
    <property type="resolution" value="5.30 A"/>
    <property type="chains" value="AM/XM=2-138"/>
</dbReference>
<dbReference type="PDB" id="6M62">
    <property type="method" value="EM"/>
    <property type="resolution" value="3.20 A"/>
    <property type="chains" value="M=1-138"/>
</dbReference>
<dbReference type="PDB" id="6N8J">
    <property type="method" value="EM"/>
    <property type="resolution" value="3.50 A"/>
    <property type="chains" value="M=1-138"/>
</dbReference>
<dbReference type="PDB" id="6N8K">
    <property type="method" value="EM"/>
    <property type="resolution" value="3.60 A"/>
    <property type="chains" value="M=1-138"/>
</dbReference>
<dbReference type="PDB" id="6N8L">
    <property type="method" value="EM"/>
    <property type="resolution" value="3.60 A"/>
    <property type="chains" value="M=1-138"/>
</dbReference>
<dbReference type="PDB" id="6N8M">
    <property type="method" value="EM"/>
    <property type="resolution" value="3.50 A"/>
    <property type="chains" value="O=1-138"/>
</dbReference>
<dbReference type="PDB" id="6N8N">
    <property type="method" value="EM"/>
    <property type="resolution" value="3.80 A"/>
    <property type="chains" value="O=1-138"/>
</dbReference>
<dbReference type="PDB" id="6N8O">
    <property type="method" value="EM"/>
    <property type="resolution" value="3.50 A"/>
    <property type="chains" value="O=1-138"/>
</dbReference>
<dbReference type="PDB" id="6OIG">
    <property type="method" value="EM"/>
    <property type="resolution" value="3.80 A"/>
    <property type="chains" value="M=3-138"/>
</dbReference>
<dbReference type="PDB" id="6Q8Y">
    <property type="method" value="EM"/>
    <property type="resolution" value="3.10 A"/>
    <property type="chains" value="AM=3-138"/>
</dbReference>
<dbReference type="PDB" id="6QIK">
    <property type="method" value="EM"/>
    <property type="resolution" value="3.10 A"/>
    <property type="chains" value="M=1-138"/>
</dbReference>
<dbReference type="PDB" id="6QT0">
    <property type="method" value="EM"/>
    <property type="resolution" value="3.40 A"/>
    <property type="chains" value="M=1-138"/>
</dbReference>
<dbReference type="PDB" id="6QTZ">
    <property type="method" value="EM"/>
    <property type="resolution" value="3.50 A"/>
    <property type="chains" value="M=1-138"/>
</dbReference>
<dbReference type="PDB" id="6R84">
    <property type="method" value="EM"/>
    <property type="resolution" value="3.60 A"/>
    <property type="chains" value="O=3-138"/>
</dbReference>
<dbReference type="PDB" id="6R86">
    <property type="method" value="EM"/>
    <property type="resolution" value="3.40 A"/>
    <property type="chains" value="O=3-138"/>
</dbReference>
<dbReference type="PDB" id="6R87">
    <property type="method" value="EM"/>
    <property type="resolution" value="3.40 A"/>
    <property type="chains" value="O=3-138"/>
</dbReference>
<dbReference type="PDB" id="6RI5">
    <property type="method" value="EM"/>
    <property type="resolution" value="3.30 A"/>
    <property type="chains" value="M=1-138"/>
</dbReference>
<dbReference type="PDB" id="6RZZ">
    <property type="method" value="EM"/>
    <property type="resolution" value="3.20 A"/>
    <property type="chains" value="M=1-138"/>
</dbReference>
<dbReference type="PDB" id="6S05">
    <property type="method" value="EM"/>
    <property type="resolution" value="3.90 A"/>
    <property type="chains" value="M=1-138"/>
</dbReference>
<dbReference type="PDB" id="6S47">
    <property type="method" value="EM"/>
    <property type="resolution" value="3.28 A"/>
    <property type="chains" value="AO=2-138"/>
</dbReference>
<dbReference type="PDB" id="6SNT">
    <property type="method" value="EM"/>
    <property type="resolution" value="2.80 A"/>
    <property type="chains" value="s=1-138"/>
</dbReference>
<dbReference type="PDB" id="6SV4">
    <property type="method" value="EM"/>
    <property type="resolution" value="3.30 A"/>
    <property type="chains" value="AM/XM/zM=1-138"/>
</dbReference>
<dbReference type="PDB" id="6T4Q">
    <property type="method" value="EM"/>
    <property type="resolution" value="2.60 A"/>
    <property type="chains" value="LM=3-138"/>
</dbReference>
<dbReference type="PDB" id="6T7I">
    <property type="method" value="EM"/>
    <property type="resolution" value="3.20 A"/>
    <property type="chains" value="LM=1-138"/>
</dbReference>
<dbReference type="PDB" id="6T7T">
    <property type="method" value="EM"/>
    <property type="resolution" value="3.10 A"/>
    <property type="chains" value="LM=1-138"/>
</dbReference>
<dbReference type="PDB" id="6T83">
    <property type="method" value="EM"/>
    <property type="resolution" value="4.00 A"/>
    <property type="chains" value="My/Oa=1-138"/>
</dbReference>
<dbReference type="PDB" id="6TB3">
    <property type="method" value="EM"/>
    <property type="resolution" value="2.80 A"/>
    <property type="chains" value="AM=3-138"/>
</dbReference>
<dbReference type="PDB" id="6TNU">
    <property type="method" value="EM"/>
    <property type="resolution" value="3.10 A"/>
    <property type="chains" value="AM=3-138"/>
</dbReference>
<dbReference type="PDB" id="6WOO">
    <property type="method" value="EM"/>
    <property type="resolution" value="2.90 A"/>
    <property type="chains" value="M=2-137"/>
</dbReference>
<dbReference type="PDB" id="6XIQ">
    <property type="method" value="EM"/>
    <property type="resolution" value="4.20 A"/>
    <property type="chains" value="M=1-138"/>
</dbReference>
<dbReference type="PDB" id="6XIR">
    <property type="method" value="EM"/>
    <property type="resolution" value="3.20 A"/>
    <property type="chains" value="M=1-138"/>
</dbReference>
<dbReference type="PDB" id="6YLG">
    <property type="method" value="EM"/>
    <property type="resolution" value="3.00 A"/>
    <property type="chains" value="M=1-138"/>
</dbReference>
<dbReference type="PDB" id="6YLH">
    <property type="method" value="EM"/>
    <property type="resolution" value="3.10 A"/>
    <property type="chains" value="M=1-138"/>
</dbReference>
<dbReference type="PDB" id="6YLX">
    <property type="method" value="EM"/>
    <property type="resolution" value="3.90 A"/>
    <property type="chains" value="M=1-138"/>
</dbReference>
<dbReference type="PDB" id="6YLY">
    <property type="method" value="EM"/>
    <property type="resolution" value="3.80 A"/>
    <property type="chains" value="M=1-138"/>
</dbReference>
<dbReference type="PDB" id="6Z6J">
    <property type="method" value="EM"/>
    <property type="resolution" value="3.40 A"/>
    <property type="chains" value="LM=1-138"/>
</dbReference>
<dbReference type="PDB" id="6Z6K">
    <property type="method" value="EM"/>
    <property type="resolution" value="3.40 A"/>
    <property type="chains" value="LM=1-138"/>
</dbReference>
<dbReference type="PDB" id="7AZY">
    <property type="method" value="EM"/>
    <property type="resolution" value="2.88 A"/>
    <property type="chains" value="N=1-138"/>
</dbReference>
<dbReference type="PDB" id="7B7D">
    <property type="method" value="EM"/>
    <property type="resolution" value="3.30 A"/>
    <property type="chains" value="LO=3-138"/>
</dbReference>
<dbReference type="PDB" id="7BT6">
    <property type="method" value="EM"/>
    <property type="resolution" value="3.12 A"/>
    <property type="chains" value="M=1-138"/>
</dbReference>
<dbReference type="PDB" id="7BTB">
    <property type="method" value="EM"/>
    <property type="resolution" value="3.22 A"/>
    <property type="chains" value="M=1-138"/>
</dbReference>
<dbReference type="PDB" id="7MPI">
    <property type="method" value="EM"/>
    <property type="resolution" value="3.05 A"/>
    <property type="chains" value="AM=3-138"/>
</dbReference>
<dbReference type="PDB" id="7MPJ">
    <property type="method" value="EM"/>
    <property type="resolution" value="2.70 A"/>
    <property type="chains" value="AM=3-138"/>
</dbReference>
<dbReference type="PDB" id="7N8B">
    <property type="method" value="EM"/>
    <property type="resolution" value="3.05 A"/>
    <property type="chains" value="AM=3-138"/>
</dbReference>
<dbReference type="PDB" id="7NAC">
    <property type="method" value="EM"/>
    <property type="resolution" value="3.04 A"/>
    <property type="chains" value="M=1-138"/>
</dbReference>
<dbReference type="PDB" id="7NRC">
    <property type="method" value="EM"/>
    <property type="resolution" value="3.90 A"/>
    <property type="chains" value="LO=3-138"/>
</dbReference>
<dbReference type="PDB" id="7NRD">
    <property type="method" value="EM"/>
    <property type="resolution" value="4.36 A"/>
    <property type="chains" value="LO=3-138"/>
</dbReference>
<dbReference type="PDB" id="7OF1">
    <property type="method" value="EM"/>
    <property type="resolution" value="3.10 A"/>
    <property type="chains" value="M=1-138"/>
</dbReference>
<dbReference type="PDB" id="7OH3">
    <property type="method" value="EM"/>
    <property type="resolution" value="3.40 A"/>
    <property type="chains" value="M=1-138"/>
</dbReference>
<dbReference type="PDB" id="7OHP">
    <property type="method" value="EM"/>
    <property type="resolution" value="3.90 A"/>
    <property type="chains" value="M=1-138"/>
</dbReference>
<dbReference type="PDB" id="7OHQ">
    <property type="method" value="EM"/>
    <property type="resolution" value="3.10 A"/>
    <property type="chains" value="M=1-138"/>
</dbReference>
<dbReference type="PDB" id="7OHR">
    <property type="method" value="EM"/>
    <property type="resolution" value="4.72 A"/>
    <property type="chains" value="M=1-138"/>
</dbReference>
<dbReference type="PDB" id="7OHS">
    <property type="method" value="EM"/>
    <property type="resolution" value="4.38 A"/>
    <property type="chains" value="M=1-138"/>
</dbReference>
<dbReference type="PDB" id="7OHT">
    <property type="method" value="EM"/>
    <property type="resolution" value="4.70 A"/>
    <property type="chains" value="M=1-138"/>
</dbReference>
<dbReference type="PDB" id="7OHU">
    <property type="method" value="EM"/>
    <property type="resolution" value="3.70 A"/>
    <property type="chains" value="M=1-138"/>
</dbReference>
<dbReference type="PDB" id="7OHV">
    <property type="method" value="EM"/>
    <property type="resolution" value="3.90 A"/>
    <property type="chains" value="M=1-138"/>
</dbReference>
<dbReference type="PDB" id="7OHW">
    <property type="method" value="EM"/>
    <property type="resolution" value="3.50 A"/>
    <property type="chains" value="M=1-138"/>
</dbReference>
<dbReference type="PDB" id="7OHX">
    <property type="method" value="EM"/>
    <property type="resolution" value="3.30 A"/>
    <property type="chains" value="M=1-138"/>
</dbReference>
<dbReference type="PDB" id="7OHY">
    <property type="method" value="EM"/>
    <property type="resolution" value="3.90 A"/>
    <property type="chains" value="M=1-138"/>
</dbReference>
<dbReference type="PDB" id="7OSA">
    <property type="method" value="X-ray"/>
    <property type="resolution" value="3.00 A"/>
    <property type="chains" value="eL14=1-138"/>
</dbReference>
<dbReference type="PDB" id="7OSM">
    <property type="method" value="X-ray"/>
    <property type="resolution" value="3.00 A"/>
    <property type="chains" value="eL14=1-138"/>
</dbReference>
<dbReference type="PDB" id="7R7A">
    <property type="method" value="EM"/>
    <property type="resolution" value="3.04 A"/>
    <property type="chains" value="M=1-138"/>
</dbReference>
<dbReference type="PDB" id="7RR5">
    <property type="method" value="EM"/>
    <property type="resolution" value="3.23 A"/>
    <property type="chains" value="LM=1-138"/>
</dbReference>
<dbReference type="PDB" id="7TOO">
    <property type="method" value="EM"/>
    <property type="resolution" value="2.70 A"/>
    <property type="chains" value="AL14=1-138"/>
</dbReference>
<dbReference type="PDB" id="7TOP">
    <property type="method" value="EM"/>
    <property type="resolution" value="2.40 A"/>
    <property type="chains" value="AL14=1-138"/>
</dbReference>
<dbReference type="PDB" id="7U0H">
    <property type="method" value="EM"/>
    <property type="resolution" value="2.76 A"/>
    <property type="chains" value="M=1-138"/>
</dbReference>
<dbReference type="PDB" id="7UG6">
    <property type="method" value="EM"/>
    <property type="resolution" value="2.90 A"/>
    <property type="chains" value="M=1-138"/>
</dbReference>
<dbReference type="PDB" id="7UOO">
    <property type="method" value="EM"/>
    <property type="resolution" value="2.34 A"/>
    <property type="chains" value="M=1-138"/>
</dbReference>
<dbReference type="PDB" id="7UQB">
    <property type="method" value="EM"/>
    <property type="resolution" value="2.43 A"/>
    <property type="chains" value="M=1-138"/>
</dbReference>
<dbReference type="PDB" id="7UQZ">
    <property type="method" value="EM"/>
    <property type="resolution" value="2.44 A"/>
    <property type="chains" value="M=1-138"/>
</dbReference>
<dbReference type="PDB" id="7V08">
    <property type="method" value="EM"/>
    <property type="resolution" value="2.36 A"/>
    <property type="chains" value="M=1-138"/>
</dbReference>
<dbReference type="PDB" id="7Z34">
    <property type="method" value="EM"/>
    <property type="resolution" value="3.80 A"/>
    <property type="chains" value="M=1-138"/>
</dbReference>
<dbReference type="PDB" id="7ZPQ">
    <property type="method" value="EM"/>
    <property type="resolution" value="3.47 A"/>
    <property type="chains" value="BL=3-138"/>
</dbReference>
<dbReference type="PDB" id="7ZRS">
    <property type="method" value="EM"/>
    <property type="resolution" value="4.80 A"/>
    <property type="chains" value="BL=3-138"/>
</dbReference>
<dbReference type="PDB" id="7ZS5">
    <property type="method" value="EM"/>
    <property type="resolution" value="3.20 A"/>
    <property type="chains" value="BN=3-138"/>
</dbReference>
<dbReference type="PDB" id="7ZUW">
    <property type="method" value="EM"/>
    <property type="resolution" value="4.30 A"/>
    <property type="chains" value="BL=3-138"/>
</dbReference>
<dbReference type="PDB" id="7ZUX">
    <property type="method" value="EM"/>
    <property type="resolution" value="2.50 A"/>
    <property type="chains" value="EL=3-138"/>
</dbReference>
<dbReference type="PDB" id="7ZW0">
    <property type="method" value="EM"/>
    <property type="resolution" value="2.40 A"/>
    <property type="chains" value="LP=1-138"/>
</dbReference>
<dbReference type="PDB" id="8AAF">
    <property type="method" value="EM"/>
    <property type="resolution" value="2.50 A"/>
    <property type="chains" value="u=1-138"/>
</dbReference>
<dbReference type="PDB" id="8AGT">
    <property type="method" value="EM"/>
    <property type="resolution" value="2.60 A"/>
    <property type="chains" value="u=1-138"/>
</dbReference>
<dbReference type="PDB" id="8AGU">
    <property type="method" value="EM"/>
    <property type="resolution" value="2.70 A"/>
    <property type="chains" value="u=1-138"/>
</dbReference>
<dbReference type="PDB" id="8AGV">
    <property type="method" value="EM"/>
    <property type="resolution" value="2.60 A"/>
    <property type="chains" value="u=1-138"/>
</dbReference>
<dbReference type="PDB" id="8AGW">
    <property type="method" value="EM"/>
    <property type="resolution" value="2.60 A"/>
    <property type="chains" value="u=1-138"/>
</dbReference>
<dbReference type="PDB" id="8AGX">
    <property type="method" value="EM"/>
    <property type="resolution" value="2.40 A"/>
    <property type="chains" value="u=1-138"/>
</dbReference>
<dbReference type="PDB" id="8AGZ">
    <property type="method" value="EM"/>
    <property type="resolution" value="2.60 A"/>
    <property type="chains" value="u=1-138"/>
</dbReference>
<dbReference type="PDB" id="8BIP">
    <property type="method" value="EM"/>
    <property type="resolution" value="3.10 A"/>
    <property type="chains" value="LM=3-138"/>
</dbReference>
<dbReference type="PDB" id="8BJQ">
    <property type="method" value="EM"/>
    <property type="resolution" value="3.80 A"/>
    <property type="chains" value="LM=3-138"/>
</dbReference>
<dbReference type="PDB" id="8BN3">
    <property type="method" value="EM"/>
    <property type="resolution" value="2.40 A"/>
    <property type="chains" value="M4=3-138"/>
</dbReference>
<dbReference type="PDB" id="8BQD">
    <property type="method" value="EM"/>
    <property type="resolution" value="3.90 A"/>
    <property type="chains" value="AM=3-138"/>
</dbReference>
<dbReference type="PDB" id="8BQX">
    <property type="method" value="EM"/>
    <property type="resolution" value="3.80 A"/>
    <property type="chains" value="AM=3-138"/>
</dbReference>
<dbReference type="PDB" id="8CCS">
    <property type="method" value="EM"/>
    <property type="resolution" value="1.97 A"/>
    <property type="chains" value="PP=1-138"/>
</dbReference>
<dbReference type="PDB" id="8CDL">
    <property type="method" value="EM"/>
    <property type="resolution" value="2.72 A"/>
    <property type="chains" value="PP=1-138"/>
</dbReference>
<dbReference type="PDB" id="8CDR">
    <property type="method" value="EM"/>
    <property type="resolution" value="2.04 A"/>
    <property type="chains" value="PP=1-138"/>
</dbReference>
<dbReference type="PDB" id="8CEH">
    <property type="method" value="EM"/>
    <property type="resolution" value="2.05 A"/>
    <property type="chains" value="PP=1-138"/>
</dbReference>
<dbReference type="PDB" id="8CF5">
    <property type="method" value="EM"/>
    <property type="resolution" value="2.71 A"/>
    <property type="chains" value="PP=1-138"/>
</dbReference>
<dbReference type="PDB" id="8CG8">
    <property type="method" value="EM"/>
    <property type="resolution" value="2.57 A"/>
    <property type="chains" value="PP=1-138"/>
</dbReference>
<dbReference type="PDB" id="8CGN">
    <property type="method" value="EM"/>
    <property type="resolution" value="2.28 A"/>
    <property type="chains" value="PP=1-138"/>
</dbReference>
<dbReference type="PDB" id="8CIV">
    <property type="method" value="EM"/>
    <property type="resolution" value="2.47 A"/>
    <property type="chains" value="PP=1-138"/>
</dbReference>
<dbReference type="PDB" id="8CKU">
    <property type="method" value="EM"/>
    <property type="resolution" value="3.11 A"/>
    <property type="chains" value="PP=1-138"/>
</dbReference>
<dbReference type="PDB" id="8CMJ">
    <property type="method" value="EM"/>
    <property type="resolution" value="3.79 A"/>
    <property type="chains" value="PP=1-138"/>
</dbReference>
<dbReference type="PDB" id="8E5T">
    <property type="method" value="EM"/>
    <property type="resolution" value="4.00 A"/>
    <property type="chains" value="M=1-138"/>
</dbReference>
<dbReference type="PDB" id="8EUB">
    <property type="method" value="EM"/>
    <property type="resolution" value="2.52 A"/>
    <property type="chains" value="AM=1-138"/>
</dbReference>
<dbReference type="PDB" id="8EVP">
    <property type="method" value="EM"/>
    <property type="resolution" value="2.38 A"/>
    <property type="chains" value="AM=1-138"/>
</dbReference>
<dbReference type="PDB" id="8EVQ">
    <property type="method" value="EM"/>
    <property type="resolution" value="2.72 A"/>
    <property type="chains" value="AM=1-138"/>
</dbReference>
<dbReference type="PDB" id="8EVR">
    <property type="method" value="EM"/>
    <property type="resolution" value="2.87 A"/>
    <property type="chains" value="AM=1-138"/>
</dbReference>
<dbReference type="PDB" id="8EVS">
    <property type="method" value="EM"/>
    <property type="resolution" value="2.62 A"/>
    <property type="chains" value="AM=1-138"/>
</dbReference>
<dbReference type="PDB" id="8EVT">
    <property type="method" value="EM"/>
    <property type="resolution" value="2.20 A"/>
    <property type="chains" value="AM=1-138"/>
</dbReference>
<dbReference type="PDB" id="8EWB">
    <property type="method" value="EM"/>
    <property type="resolution" value="2.87 A"/>
    <property type="chains" value="AM=1-138"/>
</dbReference>
<dbReference type="PDB" id="8EWC">
    <property type="method" value="EM"/>
    <property type="resolution" value="2.45 A"/>
    <property type="chains" value="AM=1-138"/>
</dbReference>
<dbReference type="PDB" id="8HFR">
    <property type="method" value="EM"/>
    <property type="resolution" value="2.64 A"/>
    <property type="chains" value="MQ=1-138"/>
</dbReference>
<dbReference type="PDB" id="8K2D">
    <property type="method" value="EM"/>
    <property type="resolution" value="3.20 A"/>
    <property type="chains" value="LM=1-138"/>
</dbReference>
<dbReference type="PDB" id="8K82">
    <property type="method" value="EM"/>
    <property type="resolution" value="3.00 A"/>
    <property type="chains" value="LM=1-138"/>
</dbReference>
<dbReference type="PDB" id="8P4V">
    <property type="method" value="X-ray"/>
    <property type="resolution" value="3.16 A"/>
    <property type="chains" value="CO/u=1-138"/>
</dbReference>
<dbReference type="PDB" id="8P8M">
    <property type="method" value="EM"/>
    <property type="resolution" value="2.66 A"/>
    <property type="chains" value="JU=1-138"/>
</dbReference>
<dbReference type="PDB" id="8P8N">
    <property type="method" value="EM"/>
    <property type="resolution" value="2.15 A"/>
    <property type="chains" value="JU=1-138"/>
</dbReference>
<dbReference type="PDB" id="8P8U">
    <property type="method" value="EM"/>
    <property type="resolution" value="2.23 A"/>
    <property type="chains" value="JU=1-138"/>
</dbReference>
<dbReference type="PDB" id="8P9A">
    <property type="method" value="X-ray"/>
    <property type="resolution" value="2.90 A"/>
    <property type="chains" value="CO/u=1-138"/>
</dbReference>
<dbReference type="PDB" id="8PFR">
    <property type="method" value="EM"/>
    <property type="resolution" value="2.15 A"/>
    <property type="chains" value="JU=1-138"/>
</dbReference>
<dbReference type="PDB" id="8T2X">
    <property type="method" value="EM"/>
    <property type="resolution" value="2.46 A"/>
    <property type="chains" value="AM=1-138"/>
</dbReference>
<dbReference type="PDB" id="8T2Y">
    <property type="method" value="EM"/>
    <property type="resolution" value="2.20 A"/>
    <property type="chains" value="AM=1-138"/>
</dbReference>
<dbReference type="PDB" id="8T2Z">
    <property type="method" value="EM"/>
    <property type="resolution" value="2.40 A"/>
    <property type="chains" value="AM=1-138"/>
</dbReference>
<dbReference type="PDB" id="8T30">
    <property type="method" value="EM"/>
    <property type="resolution" value="2.88 A"/>
    <property type="chains" value="AM=1-138"/>
</dbReference>
<dbReference type="PDB" id="8T3A">
    <property type="method" value="EM"/>
    <property type="resolution" value="2.86 A"/>
    <property type="chains" value="AM=1-138"/>
</dbReference>
<dbReference type="PDB" id="8T3B">
    <property type="method" value="EM"/>
    <property type="resolution" value="3.08 A"/>
    <property type="chains" value="AM=1-138"/>
</dbReference>
<dbReference type="PDB" id="8T3C">
    <property type="method" value="EM"/>
    <property type="resolution" value="3.86 A"/>
    <property type="chains" value="AM=1-138"/>
</dbReference>
<dbReference type="PDB" id="8T3D">
    <property type="method" value="EM"/>
    <property type="resolution" value="2.95 A"/>
    <property type="chains" value="AM=1-138"/>
</dbReference>
<dbReference type="PDB" id="8T3E">
    <property type="method" value="EM"/>
    <property type="resolution" value="3.04 A"/>
    <property type="chains" value="AM=1-138"/>
</dbReference>
<dbReference type="PDB" id="8T3F">
    <property type="method" value="EM"/>
    <property type="resolution" value="3.09 A"/>
    <property type="chains" value="AM=1-138"/>
</dbReference>
<dbReference type="PDB" id="8UT0">
    <property type="method" value="EM"/>
    <property type="resolution" value="3.22 A"/>
    <property type="chains" value="LO=3-138"/>
</dbReference>
<dbReference type="PDB" id="8UTI">
    <property type="method" value="EM"/>
    <property type="resolution" value="3.13 A"/>
    <property type="chains" value="LO=3-138"/>
</dbReference>
<dbReference type="PDB" id="8V83">
    <property type="method" value="EM"/>
    <property type="resolution" value="2.53 A"/>
    <property type="chains" value="M=1-138"/>
</dbReference>
<dbReference type="PDB" id="8V84">
    <property type="method" value="EM"/>
    <property type="resolution" value="2.70 A"/>
    <property type="chains" value="M=1-138"/>
</dbReference>
<dbReference type="PDB" id="8V87">
    <property type="method" value="EM"/>
    <property type="resolution" value="2.66 A"/>
    <property type="chains" value="M=1-138"/>
</dbReference>
<dbReference type="PDB" id="8XU8">
    <property type="method" value="EM"/>
    <property type="resolution" value="3.40 A"/>
    <property type="chains" value="O=3-138"/>
</dbReference>
<dbReference type="PDB" id="8Y0U">
    <property type="method" value="EM"/>
    <property type="resolution" value="3.59 A"/>
    <property type="chains" value="LM=1-138"/>
</dbReference>
<dbReference type="PDB" id="8YLD">
    <property type="method" value="EM"/>
    <property type="resolution" value="3.90 A"/>
    <property type="chains" value="O=3-138"/>
</dbReference>
<dbReference type="PDB" id="8YLR">
    <property type="method" value="EM"/>
    <property type="resolution" value="3.90 A"/>
    <property type="chains" value="O=3-138"/>
</dbReference>
<dbReference type="PDB" id="8Z70">
    <property type="method" value="EM"/>
    <property type="resolution" value="3.20 A"/>
    <property type="chains" value="O=3-138"/>
</dbReference>
<dbReference type="PDB" id="8Z71">
    <property type="method" value="EM"/>
    <property type="resolution" value="3.60 A"/>
    <property type="chains" value="O=3-138"/>
</dbReference>
<dbReference type="PDB" id="9F9S">
    <property type="method" value="EM"/>
    <property type="resolution" value="2.90 A"/>
    <property type="chains" value="LH/MH=1-138"/>
</dbReference>
<dbReference type="PDBsum" id="3J6X"/>
<dbReference type="PDBsum" id="3J6Y"/>
<dbReference type="PDBsum" id="3J77"/>
<dbReference type="PDBsum" id="3J78"/>
<dbReference type="PDBsum" id="3JCT"/>
<dbReference type="PDBsum" id="4U3M"/>
<dbReference type="PDBsum" id="4U3N"/>
<dbReference type="PDBsum" id="4U3U"/>
<dbReference type="PDBsum" id="4U4N"/>
<dbReference type="PDBsum" id="4U4O"/>
<dbReference type="PDBsum" id="4U4Q"/>
<dbReference type="PDBsum" id="4U4R"/>
<dbReference type="PDBsum" id="4U4U"/>
<dbReference type="PDBsum" id="4U4Y"/>
<dbReference type="PDBsum" id="4U4Z"/>
<dbReference type="PDBsum" id="4U50"/>
<dbReference type="PDBsum" id="4U51"/>
<dbReference type="PDBsum" id="4U52"/>
<dbReference type="PDBsum" id="4U53"/>
<dbReference type="PDBsum" id="4U55"/>
<dbReference type="PDBsum" id="4U56"/>
<dbReference type="PDBsum" id="4U6F"/>
<dbReference type="PDBsum" id="4V6I"/>
<dbReference type="PDBsum" id="4V7F"/>
<dbReference type="PDBsum" id="4V7R"/>
<dbReference type="PDBsum" id="4V88"/>
<dbReference type="PDBsum" id="4V8T"/>
<dbReference type="PDBsum" id="5APN"/>
<dbReference type="PDBsum" id="5APO"/>
<dbReference type="PDBsum" id="5DAT"/>
<dbReference type="PDBsum" id="5DC3"/>
<dbReference type="PDBsum" id="5DGE"/>
<dbReference type="PDBsum" id="5DGF"/>
<dbReference type="PDBsum" id="5DGV"/>
<dbReference type="PDBsum" id="5FCI"/>
<dbReference type="PDBsum" id="5FCJ"/>
<dbReference type="PDBsum" id="5GAK"/>
<dbReference type="PDBsum" id="5H4P"/>
<dbReference type="PDBsum" id="5I4L"/>
<dbReference type="PDBsum" id="5JCS"/>
<dbReference type="PDBsum" id="5JUO"/>
<dbReference type="PDBsum" id="5JUP"/>
<dbReference type="PDBsum" id="5JUS"/>
<dbReference type="PDBsum" id="5JUT"/>
<dbReference type="PDBsum" id="5JUU"/>
<dbReference type="PDBsum" id="5LYB"/>
<dbReference type="PDBsum" id="5M1J"/>
<dbReference type="PDBsum" id="5MC6"/>
<dbReference type="PDBsum" id="5MEI"/>
<dbReference type="PDBsum" id="5NDG"/>
<dbReference type="PDBsum" id="5NDV"/>
<dbReference type="PDBsum" id="5NDW"/>
<dbReference type="PDBsum" id="5OBM"/>
<dbReference type="PDBsum" id="5ON6"/>
<dbReference type="PDBsum" id="5T62"/>
<dbReference type="PDBsum" id="5T6R"/>
<dbReference type="PDBsum" id="5TBW"/>
<dbReference type="PDBsum" id="5TGA"/>
<dbReference type="PDBsum" id="5TGM"/>
<dbReference type="PDBsum" id="5Z3G"/>
<dbReference type="PDBsum" id="6C0F"/>
<dbReference type="PDBsum" id="6CB1"/>
<dbReference type="PDBsum" id="6ELZ"/>
<dbReference type="PDBsum" id="6EM1"/>
<dbReference type="PDBsum" id="6EM3"/>
<dbReference type="PDBsum" id="6EM4"/>
<dbReference type="PDBsum" id="6EM5"/>
<dbReference type="PDBsum" id="6FT6"/>
<dbReference type="PDBsum" id="6GQ1"/>
<dbReference type="PDBsum" id="6GQB"/>
<dbReference type="PDBsum" id="6GQV"/>
<dbReference type="PDBsum" id="6HD7"/>
<dbReference type="PDBsum" id="6HHQ"/>
<dbReference type="PDBsum" id="6I7O"/>
<dbReference type="PDBsum" id="6M62"/>
<dbReference type="PDBsum" id="6N8J"/>
<dbReference type="PDBsum" id="6N8K"/>
<dbReference type="PDBsum" id="6N8L"/>
<dbReference type="PDBsum" id="6N8M"/>
<dbReference type="PDBsum" id="6N8N"/>
<dbReference type="PDBsum" id="6N8O"/>
<dbReference type="PDBsum" id="6OIG"/>
<dbReference type="PDBsum" id="6Q8Y"/>
<dbReference type="PDBsum" id="6QIK"/>
<dbReference type="PDBsum" id="6QT0"/>
<dbReference type="PDBsum" id="6QTZ"/>
<dbReference type="PDBsum" id="6R84"/>
<dbReference type="PDBsum" id="6R86"/>
<dbReference type="PDBsum" id="6R87"/>
<dbReference type="PDBsum" id="6RI5"/>
<dbReference type="PDBsum" id="6RZZ"/>
<dbReference type="PDBsum" id="6S05"/>
<dbReference type="PDBsum" id="6S47"/>
<dbReference type="PDBsum" id="6SNT"/>
<dbReference type="PDBsum" id="6SV4"/>
<dbReference type="PDBsum" id="6T4Q"/>
<dbReference type="PDBsum" id="6T7I"/>
<dbReference type="PDBsum" id="6T7T"/>
<dbReference type="PDBsum" id="6T83"/>
<dbReference type="PDBsum" id="6TB3"/>
<dbReference type="PDBsum" id="6TNU"/>
<dbReference type="PDBsum" id="6WOO"/>
<dbReference type="PDBsum" id="6XIQ"/>
<dbReference type="PDBsum" id="6XIR"/>
<dbReference type="PDBsum" id="6YLG"/>
<dbReference type="PDBsum" id="6YLH"/>
<dbReference type="PDBsum" id="6YLX"/>
<dbReference type="PDBsum" id="6YLY"/>
<dbReference type="PDBsum" id="6Z6J"/>
<dbReference type="PDBsum" id="6Z6K"/>
<dbReference type="PDBsum" id="7AZY"/>
<dbReference type="PDBsum" id="7B7D"/>
<dbReference type="PDBsum" id="7BT6"/>
<dbReference type="PDBsum" id="7BTB"/>
<dbReference type="PDBsum" id="7MPI"/>
<dbReference type="PDBsum" id="7MPJ"/>
<dbReference type="PDBsum" id="7N8B"/>
<dbReference type="PDBsum" id="7NAC"/>
<dbReference type="PDBsum" id="7NRC"/>
<dbReference type="PDBsum" id="7NRD"/>
<dbReference type="PDBsum" id="7OF1"/>
<dbReference type="PDBsum" id="7OH3"/>
<dbReference type="PDBsum" id="7OHP"/>
<dbReference type="PDBsum" id="7OHQ"/>
<dbReference type="PDBsum" id="7OHR"/>
<dbReference type="PDBsum" id="7OHS"/>
<dbReference type="PDBsum" id="7OHT"/>
<dbReference type="PDBsum" id="7OHU"/>
<dbReference type="PDBsum" id="7OHV"/>
<dbReference type="PDBsum" id="7OHW"/>
<dbReference type="PDBsum" id="7OHX"/>
<dbReference type="PDBsum" id="7OHY"/>
<dbReference type="PDBsum" id="7OSA"/>
<dbReference type="PDBsum" id="7OSM"/>
<dbReference type="PDBsum" id="7R7A"/>
<dbReference type="PDBsum" id="7RR5"/>
<dbReference type="PDBsum" id="7TOO"/>
<dbReference type="PDBsum" id="7TOP"/>
<dbReference type="PDBsum" id="7U0H"/>
<dbReference type="PDBsum" id="7UG6"/>
<dbReference type="PDBsum" id="7UOO"/>
<dbReference type="PDBsum" id="7UQB"/>
<dbReference type="PDBsum" id="7UQZ"/>
<dbReference type="PDBsum" id="7V08"/>
<dbReference type="PDBsum" id="7Z34"/>
<dbReference type="PDBsum" id="7ZPQ"/>
<dbReference type="PDBsum" id="7ZRS"/>
<dbReference type="PDBsum" id="7ZS5"/>
<dbReference type="PDBsum" id="7ZUW"/>
<dbReference type="PDBsum" id="7ZUX"/>
<dbReference type="PDBsum" id="7ZW0"/>
<dbReference type="PDBsum" id="8AAF"/>
<dbReference type="PDBsum" id="8AGT"/>
<dbReference type="PDBsum" id="8AGU"/>
<dbReference type="PDBsum" id="8AGV"/>
<dbReference type="PDBsum" id="8AGW"/>
<dbReference type="PDBsum" id="8AGX"/>
<dbReference type="PDBsum" id="8AGZ"/>
<dbReference type="PDBsum" id="8BIP"/>
<dbReference type="PDBsum" id="8BJQ"/>
<dbReference type="PDBsum" id="8BN3"/>
<dbReference type="PDBsum" id="8BQD"/>
<dbReference type="PDBsum" id="8BQX"/>
<dbReference type="PDBsum" id="8CCS"/>
<dbReference type="PDBsum" id="8CDL"/>
<dbReference type="PDBsum" id="8CDR"/>
<dbReference type="PDBsum" id="8CEH"/>
<dbReference type="PDBsum" id="8CF5"/>
<dbReference type="PDBsum" id="8CG8"/>
<dbReference type="PDBsum" id="8CGN"/>
<dbReference type="PDBsum" id="8CIV"/>
<dbReference type="PDBsum" id="8CKU"/>
<dbReference type="PDBsum" id="8CMJ"/>
<dbReference type="PDBsum" id="8E5T"/>
<dbReference type="PDBsum" id="8EUB"/>
<dbReference type="PDBsum" id="8EVP"/>
<dbReference type="PDBsum" id="8EVQ"/>
<dbReference type="PDBsum" id="8EVR"/>
<dbReference type="PDBsum" id="8EVS"/>
<dbReference type="PDBsum" id="8EVT"/>
<dbReference type="PDBsum" id="8EWB"/>
<dbReference type="PDBsum" id="8EWC"/>
<dbReference type="PDBsum" id="8HFR"/>
<dbReference type="PDBsum" id="8K2D"/>
<dbReference type="PDBsum" id="8K82"/>
<dbReference type="PDBsum" id="8P4V"/>
<dbReference type="PDBsum" id="8P8M"/>
<dbReference type="PDBsum" id="8P8N"/>
<dbReference type="PDBsum" id="8P8U"/>
<dbReference type="PDBsum" id="8P9A"/>
<dbReference type="PDBsum" id="8PFR"/>
<dbReference type="PDBsum" id="8T2X"/>
<dbReference type="PDBsum" id="8T2Y"/>
<dbReference type="PDBsum" id="8T2Z"/>
<dbReference type="PDBsum" id="8T30"/>
<dbReference type="PDBsum" id="8T3A"/>
<dbReference type="PDBsum" id="8T3B"/>
<dbReference type="PDBsum" id="8T3C"/>
<dbReference type="PDBsum" id="8T3D"/>
<dbReference type="PDBsum" id="8T3E"/>
<dbReference type="PDBsum" id="8T3F"/>
<dbReference type="PDBsum" id="8UT0"/>
<dbReference type="PDBsum" id="8UTI"/>
<dbReference type="PDBsum" id="8V83"/>
<dbReference type="PDBsum" id="8V84"/>
<dbReference type="PDBsum" id="8V87"/>
<dbReference type="PDBsum" id="8XU8"/>
<dbReference type="PDBsum" id="8Y0U"/>
<dbReference type="PDBsum" id="8YLD"/>
<dbReference type="PDBsum" id="8YLR"/>
<dbReference type="PDBsum" id="8Z70"/>
<dbReference type="PDBsum" id="8Z71"/>
<dbReference type="PDBsum" id="9F9S"/>
<dbReference type="EMDB" id="EMD-0047"/>
<dbReference type="EMDB" id="EMD-0048"/>
<dbReference type="EMDB" id="EMD-0049"/>
<dbReference type="EMDB" id="EMD-0202"/>
<dbReference type="EMDB" id="EMD-0369"/>
<dbReference type="EMDB" id="EMD-0370"/>
<dbReference type="EMDB" id="EMD-0371"/>
<dbReference type="EMDB" id="EMD-0372"/>
<dbReference type="EMDB" id="EMD-0373"/>
<dbReference type="EMDB" id="EMD-0374"/>
<dbReference type="EMDB" id="EMD-10068"/>
<dbReference type="EMDB" id="EMD-10071"/>
<dbReference type="EMDB" id="EMD-10098"/>
<dbReference type="EMDB" id="EMD-10262"/>
<dbReference type="EMDB" id="EMD-10315"/>
<dbReference type="EMDB" id="EMD-10377"/>
<dbReference type="EMDB" id="EMD-10396"/>
<dbReference type="EMDB" id="EMD-10397"/>
<dbReference type="EMDB" id="EMD-10398"/>
<dbReference type="EMDB" id="EMD-10431"/>
<dbReference type="EMDB" id="EMD-10537"/>
<dbReference type="EMDB" id="EMD-10838"/>
<dbReference type="EMDB" id="EMD-10839"/>
<dbReference type="EMDB" id="EMD-10841"/>
<dbReference type="EMDB" id="EMD-10842"/>
<dbReference type="EMDB" id="EMD-11096"/>
<dbReference type="EMDB" id="EMD-11097"/>
<dbReference type="EMDB" id="EMD-11951"/>
<dbReference type="EMDB" id="EMD-12081"/>
<dbReference type="EMDB" id="EMD-12534"/>
<dbReference type="EMDB" id="EMD-12535"/>
<dbReference type="EMDB" id="EMD-12866"/>
<dbReference type="EMDB" id="EMD-12892"/>
<dbReference type="EMDB" id="EMD-12904"/>
<dbReference type="EMDB" id="EMD-12905"/>
<dbReference type="EMDB" id="EMD-12906"/>
<dbReference type="EMDB" id="EMD-12907"/>
<dbReference type="EMDB" id="EMD-12908"/>
<dbReference type="EMDB" id="EMD-12909"/>
<dbReference type="EMDB" id="EMD-12910"/>
<dbReference type="EMDB" id="EMD-12911"/>
<dbReference type="EMDB" id="EMD-12912"/>
<dbReference type="EMDB" id="EMD-12913"/>
<dbReference type="EMDB" id="EMD-14471"/>
<dbReference type="EMDB" id="EMD-14861"/>
<dbReference type="EMDB" id="EMD-14921"/>
<dbReference type="EMDB" id="EMD-14926"/>
<dbReference type="EMDB" id="EMD-14978"/>
<dbReference type="EMDB" id="EMD-14979"/>
<dbReference type="EMDB" id="EMD-14990"/>
<dbReference type="EMDB" id="EMD-15296"/>
<dbReference type="EMDB" id="EMD-15423"/>
<dbReference type="EMDB" id="EMD-15424"/>
<dbReference type="EMDB" id="EMD-15425"/>
<dbReference type="EMDB" id="EMD-15426"/>
<dbReference type="EMDB" id="EMD-15427"/>
<dbReference type="EMDB" id="EMD-15428"/>
<dbReference type="EMDB" id="EMD-16086"/>
<dbReference type="EMDB" id="EMD-16090"/>
<dbReference type="EMDB" id="EMD-16127"/>
<dbReference type="EMDB" id="EMD-16182"/>
<dbReference type="EMDB" id="EMD-16191"/>
<dbReference type="EMDB" id="EMD-16563"/>
<dbReference type="EMDB" id="EMD-16591"/>
<dbReference type="EMDB" id="EMD-16594"/>
<dbReference type="EMDB" id="EMD-16609"/>
<dbReference type="EMDB" id="EMD-16616"/>
<dbReference type="EMDB" id="EMD-16634"/>
<dbReference type="EMDB" id="EMD-16648"/>
<dbReference type="EMDB" id="EMD-16684"/>
<dbReference type="EMDB" id="EMD-16702"/>
<dbReference type="EMDB" id="EMD-16729"/>
<dbReference type="EMDB" id="EMD-17549"/>
<dbReference type="EMDB" id="EMD-17550"/>
<dbReference type="EMDB" id="EMD-17552"/>
<dbReference type="EMDB" id="EMD-17653"/>
<dbReference type="EMDB" id="EMD-20077"/>
<dbReference type="EMDB" id="EMD-21859"/>
<dbReference type="EMDB" id="EMD-22196"/>
<dbReference type="EMDB" id="EMD-22198"/>
<dbReference type="EMDB" id="EMD-23934"/>
<dbReference type="EMDB" id="EMD-23935"/>
<dbReference type="EMDB" id="EMD-24235"/>
<dbReference type="EMDB" id="EMD-24269"/>
<dbReference type="EMDB" id="EMD-24296"/>
<dbReference type="EMDB" id="EMD-24652"/>
<dbReference type="EMDB" id="EMD-26033"/>
<dbReference type="EMDB" id="EMD-26034"/>
<dbReference type="EMDB" id="EMD-26259"/>
<dbReference type="EMDB" id="EMD-26485"/>
<dbReference type="EMDB" id="EMD-26651"/>
<dbReference type="EMDB" id="EMD-26686"/>
<dbReference type="EMDB" id="EMD-26703"/>
<dbReference type="EMDB" id="EMD-26941"/>
<dbReference type="EMDB" id="EMD-27919"/>
<dbReference type="EMDB" id="EMD-28610"/>
<dbReference type="EMDB" id="EMD-28632"/>
<dbReference type="EMDB" id="EMD-28633"/>
<dbReference type="EMDB" id="EMD-28634"/>
<dbReference type="EMDB" id="EMD-28635"/>
<dbReference type="EMDB" id="EMD-28636"/>
<dbReference type="EMDB" id="EMD-28642"/>
<dbReference type="EMDB" id="EMD-28643"/>
<dbReference type="EMDB" id="EMD-30108"/>
<dbReference type="EMDB" id="EMD-30170"/>
<dbReference type="EMDB" id="EMD-30174"/>
<dbReference type="EMDB" id="EMD-3461"/>
<dbReference type="EMDB" id="EMD-34725"/>
<dbReference type="EMDB" id="EMD-36839"/>
<dbReference type="EMDB" id="EMD-36945"/>
<dbReference type="EMDB" id="EMD-38660"/>
<dbReference type="EMDB" id="EMD-40990"/>
<dbReference type="EMDB" id="EMD-40991"/>
<dbReference type="EMDB" id="EMD-40992"/>
<dbReference type="EMDB" id="EMD-40993"/>
<dbReference type="EMDB" id="EMD-40997"/>
<dbReference type="EMDB" id="EMD-40998"/>
<dbReference type="EMDB" id="EMD-40999"/>
<dbReference type="EMDB" id="EMD-41000"/>
<dbReference type="EMDB" id="EMD-41001"/>
<dbReference type="EMDB" id="EMD-41002"/>
<dbReference type="EMDB" id="EMD-4140"/>
<dbReference type="EMDB" id="EMD-42525"/>
<dbReference type="EMDB" id="EMD-42540"/>
<dbReference type="EMDB" id="EMD-43017"/>
<dbReference type="EMDB" id="EMD-4302"/>
<dbReference type="EMDB" id="EMD-43021"/>
<dbReference type="EMDB" id="EMD-43027"/>
<dbReference type="EMDB" id="EMD-4427"/>
<dbReference type="EMDB" id="EMD-4474"/>
<dbReference type="EMDB" id="EMD-4560"/>
<dbReference type="EMDB" id="EMD-4630"/>
<dbReference type="EMDB" id="EMD-4636"/>
<dbReference type="EMDB" id="EMD-4751"/>
<dbReference type="EMDB" id="EMD-4752"/>
<dbReference type="EMDB" id="EMD-4753"/>
<dbReference type="EMDB" id="EMD-4884"/>
<dbReference type="EMDB" id="EMD-50259"/>
<dbReference type="EMDB" id="EMD-6878"/>
<dbReference type="EMDB" id="EMD-7324"/>
<dbReference type="EMDB" id="EMD-7445"/>
<dbReference type="EMDB" id="EMD-8362"/>
<dbReference type="EMDB" id="EMD-8368"/>
<dbReference type="SMR" id="P36105"/>
<dbReference type="BioGRID" id="34127">
    <property type="interactions" value="679"/>
</dbReference>
<dbReference type="ComplexPortal" id="CPX-1601">
    <property type="entry name" value="60S cytosolic large ribosomal subunit"/>
</dbReference>
<dbReference type="DIP" id="DIP-8081N"/>
<dbReference type="FunCoup" id="P36105">
    <property type="interactions" value="1233"/>
</dbReference>
<dbReference type="IntAct" id="P36105">
    <property type="interactions" value="130"/>
</dbReference>
<dbReference type="MINT" id="P36105"/>
<dbReference type="STRING" id="4932.YKL006W"/>
<dbReference type="iPTMnet" id="P36105"/>
<dbReference type="PaxDb" id="4932-YKL006W"/>
<dbReference type="PeptideAtlas" id="P36105"/>
<dbReference type="EnsemblFungi" id="YKL006W_mRNA">
    <property type="protein sequence ID" value="YKL006W"/>
    <property type="gene ID" value="YKL006W"/>
</dbReference>
<dbReference type="GeneID" id="853864"/>
<dbReference type="KEGG" id="sce:YKL006W"/>
<dbReference type="AGR" id="SGD:S000001489"/>
<dbReference type="SGD" id="S000001489">
    <property type="gene designation" value="RPL14A"/>
</dbReference>
<dbReference type="VEuPathDB" id="FungiDB:YKL006W"/>
<dbReference type="eggNOG" id="KOG3421">
    <property type="taxonomic scope" value="Eukaryota"/>
</dbReference>
<dbReference type="GeneTree" id="ENSGT00390000007888"/>
<dbReference type="HOGENOM" id="CLU_082438_3_1_1"/>
<dbReference type="InParanoid" id="P36105"/>
<dbReference type="OMA" id="ANWRFVE"/>
<dbReference type="OrthoDB" id="1875589at2759"/>
<dbReference type="BioCyc" id="YEAST:G3O-31816-MONOMER"/>
<dbReference type="BioGRID-ORCS" id="853864">
    <property type="hits" value="2 hits in 10 CRISPR screens"/>
</dbReference>
<dbReference type="PRO" id="PR:P36105"/>
<dbReference type="Proteomes" id="UP000002311">
    <property type="component" value="Chromosome XI"/>
</dbReference>
<dbReference type="RNAct" id="P36105">
    <property type="molecule type" value="protein"/>
</dbReference>
<dbReference type="GO" id="GO:0005829">
    <property type="term" value="C:cytosol"/>
    <property type="evidence" value="ECO:0000304"/>
    <property type="project" value="Reactome"/>
</dbReference>
<dbReference type="GO" id="GO:0022625">
    <property type="term" value="C:cytosolic large ribosomal subunit"/>
    <property type="evidence" value="ECO:0000314"/>
    <property type="project" value="SGD"/>
</dbReference>
<dbReference type="GO" id="GO:0005730">
    <property type="term" value="C:nucleolus"/>
    <property type="evidence" value="ECO:0000314"/>
    <property type="project" value="SGD"/>
</dbReference>
<dbReference type="GO" id="GO:0003723">
    <property type="term" value="F:RNA binding"/>
    <property type="evidence" value="ECO:0000314"/>
    <property type="project" value="SGD"/>
</dbReference>
<dbReference type="GO" id="GO:0003735">
    <property type="term" value="F:structural constituent of ribosome"/>
    <property type="evidence" value="ECO:0000318"/>
    <property type="project" value="GO_Central"/>
</dbReference>
<dbReference type="GO" id="GO:0002181">
    <property type="term" value="P:cytoplasmic translation"/>
    <property type="evidence" value="ECO:0000305"/>
    <property type="project" value="SGD"/>
</dbReference>
<dbReference type="GO" id="GO:0016236">
    <property type="term" value="P:macroautophagy"/>
    <property type="evidence" value="ECO:0000315"/>
    <property type="project" value="SGD"/>
</dbReference>
<dbReference type="GO" id="GO:0000470">
    <property type="term" value="P:maturation of LSU-rRNA"/>
    <property type="evidence" value="ECO:0000315"/>
    <property type="project" value="SGD"/>
</dbReference>
<dbReference type="GO" id="GO:0000027">
    <property type="term" value="P:ribosomal large subunit assembly"/>
    <property type="evidence" value="ECO:0000315"/>
    <property type="project" value="SGD"/>
</dbReference>
<dbReference type="GO" id="GO:0042273">
    <property type="term" value="P:ribosomal large subunit biogenesis"/>
    <property type="evidence" value="ECO:0000318"/>
    <property type="project" value="GO_Central"/>
</dbReference>
<dbReference type="CDD" id="cd23702">
    <property type="entry name" value="eL14"/>
    <property type="match status" value="1"/>
</dbReference>
<dbReference type="FunFam" id="2.30.30.30:FF:000030">
    <property type="entry name" value="60S ribosomal protein L14"/>
    <property type="match status" value="1"/>
</dbReference>
<dbReference type="Gene3D" id="2.30.30.30">
    <property type="match status" value="1"/>
</dbReference>
<dbReference type="Gene3D" id="6.10.250.2270">
    <property type="match status" value="1"/>
</dbReference>
<dbReference type="InterPro" id="IPR005824">
    <property type="entry name" value="KOW"/>
</dbReference>
<dbReference type="InterPro" id="IPR014722">
    <property type="entry name" value="Rib_uL2_dom2"/>
</dbReference>
<dbReference type="InterPro" id="IPR039660">
    <property type="entry name" value="Ribosomal_eL14"/>
</dbReference>
<dbReference type="InterPro" id="IPR002784">
    <property type="entry name" value="Ribosomal_eL14_dom"/>
</dbReference>
<dbReference type="InterPro" id="IPR008991">
    <property type="entry name" value="Translation_prot_SH3-like_sf"/>
</dbReference>
<dbReference type="PANTHER" id="PTHR11127">
    <property type="entry name" value="60S RIBOSOMAL PROTEIN L14"/>
    <property type="match status" value="1"/>
</dbReference>
<dbReference type="PANTHER" id="PTHR11127:SF2">
    <property type="entry name" value="LARGE RIBOSOMAL SUBUNIT PROTEIN EL14"/>
    <property type="match status" value="1"/>
</dbReference>
<dbReference type="Pfam" id="PF00467">
    <property type="entry name" value="KOW"/>
    <property type="match status" value="1"/>
</dbReference>
<dbReference type="Pfam" id="PF01929">
    <property type="entry name" value="Ribosomal_L14e"/>
    <property type="match status" value="1"/>
</dbReference>
<dbReference type="SUPFAM" id="SSF50104">
    <property type="entry name" value="Translation proteins SH3-like domain"/>
    <property type="match status" value="1"/>
</dbReference>
<accession>P36105</accession>
<accession>D6VXT1</accession>
<proteinExistence type="evidence at protein level"/>